<keyword id="KW-1003">Cell membrane</keyword>
<keyword id="KW-0297">G-protein coupled receptor</keyword>
<keyword id="KW-0325">Glycoprotein</keyword>
<keyword id="KW-0472">Membrane</keyword>
<keyword id="KW-0675">Receptor</keyword>
<keyword id="KW-1185">Reference proteome</keyword>
<keyword id="KW-0732">Signal</keyword>
<keyword id="KW-0807">Transducer</keyword>
<keyword id="KW-0812">Transmembrane</keyword>
<keyword id="KW-1133">Transmembrane helix</keyword>
<gene>
    <name type="primary">GPR83</name>
    <name type="synonym">GIR</name>
</gene>
<accession>Q9TTQ9</accession>
<dbReference type="EMBL" id="Y19224">
    <property type="protein sequence ID" value="CAB57795.1"/>
    <property type="molecule type" value="mRNA"/>
</dbReference>
<dbReference type="RefSeq" id="NP_001003108.1">
    <property type="nucleotide sequence ID" value="NM_001003108.1"/>
</dbReference>
<dbReference type="SMR" id="Q9TTQ9"/>
<dbReference type="FunCoup" id="Q9TTQ9">
    <property type="interactions" value="183"/>
</dbReference>
<dbReference type="STRING" id="9615.ENSCAFP00000039807"/>
<dbReference type="GlyCosmos" id="Q9TTQ9">
    <property type="glycosylation" value="3 sites, No reported glycans"/>
</dbReference>
<dbReference type="PaxDb" id="9612-ENSCAFP00000039807"/>
<dbReference type="Ensembl" id="ENSCAFT00000049808.3">
    <property type="protein sequence ID" value="ENSCAFP00000039807.1"/>
    <property type="gene ID" value="ENSCAFG00000031257.3"/>
</dbReference>
<dbReference type="Ensembl" id="ENSCAFT00030031874.1">
    <property type="protein sequence ID" value="ENSCAFP00030027796.1"/>
    <property type="gene ID" value="ENSCAFG00030017283.1"/>
</dbReference>
<dbReference type="GeneID" id="403699"/>
<dbReference type="KEGG" id="cfa:403699"/>
<dbReference type="CTD" id="10888"/>
<dbReference type="VGNC" id="VGNC:41445">
    <property type="gene designation" value="GPR83"/>
</dbReference>
<dbReference type="eggNOG" id="KOG3656">
    <property type="taxonomic scope" value="Eukaryota"/>
</dbReference>
<dbReference type="HOGENOM" id="CLU_009579_6_1_1"/>
<dbReference type="InParanoid" id="Q9TTQ9"/>
<dbReference type="OMA" id="IYISVIW"/>
<dbReference type="OrthoDB" id="5952899at2759"/>
<dbReference type="TreeFam" id="TF315303"/>
<dbReference type="Proteomes" id="UP000002254">
    <property type="component" value="Chromosome 21"/>
</dbReference>
<dbReference type="Proteomes" id="UP000694429">
    <property type="component" value="Chromosome 21"/>
</dbReference>
<dbReference type="Proteomes" id="UP000694542">
    <property type="component" value="Unplaced"/>
</dbReference>
<dbReference type="Proteomes" id="UP000805418">
    <property type="component" value="Unplaced"/>
</dbReference>
<dbReference type="Bgee" id="ENSCAFG00000031257">
    <property type="expression patterns" value="Expressed in prefrontal cortex and 36 other cell types or tissues"/>
</dbReference>
<dbReference type="GO" id="GO:0005886">
    <property type="term" value="C:plasma membrane"/>
    <property type="evidence" value="ECO:0000250"/>
    <property type="project" value="UniProtKB"/>
</dbReference>
<dbReference type="GO" id="GO:0004930">
    <property type="term" value="F:G protein-coupled receptor activity"/>
    <property type="evidence" value="ECO:0000250"/>
    <property type="project" value="UniProtKB"/>
</dbReference>
<dbReference type="GO" id="GO:0008188">
    <property type="term" value="F:neuropeptide receptor activity"/>
    <property type="evidence" value="ECO:0000250"/>
    <property type="project" value="UniProtKB"/>
</dbReference>
<dbReference type="GO" id="GO:0004983">
    <property type="term" value="F:neuropeptide Y receptor activity"/>
    <property type="evidence" value="ECO:0007669"/>
    <property type="project" value="InterPro"/>
</dbReference>
<dbReference type="GO" id="GO:0007186">
    <property type="term" value="P:G protein-coupled receptor signaling pathway"/>
    <property type="evidence" value="ECO:0000250"/>
    <property type="project" value="UniProtKB"/>
</dbReference>
<dbReference type="GO" id="GO:0007218">
    <property type="term" value="P:neuropeptide signaling pathway"/>
    <property type="evidence" value="ECO:0000250"/>
    <property type="project" value="UniProtKB"/>
</dbReference>
<dbReference type="GO" id="GO:0007200">
    <property type="term" value="P:phospholipase C-activating G protein-coupled receptor signaling pathway"/>
    <property type="evidence" value="ECO:0000250"/>
    <property type="project" value="UniProtKB"/>
</dbReference>
<dbReference type="CDD" id="cd15389">
    <property type="entry name" value="7tmA_GPR83"/>
    <property type="match status" value="1"/>
</dbReference>
<dbReference type="FunFam" id="1.20.1070.10:FF:000191">
    <property type="entry name" value="Probable G-protein coupled receptor 83"/>
    <property type="match status" value="1"/>
</dbReference>
<dbReference type="Gene3D" id="1.20.1070.10">
    <property type="entry name" value="Rhodopsin 7-helix transmembrane proteins"/>
    <property type="match status" value="1"/>
</dbReference>
<dbReference type="InterPro" id="IPR000276">
    <property type="entry name" value="GPCR_Rhodpsn"/>
</dbReference>
<dbReference type="InterPro" id="IPR017452">
    <property type="entry name" value="GPCR_Rhodpsn_7TM"/>
</dbReference>
<dbReference type="InterPro" id="IPR000611">
    <property type="entry name" value="NPY_rcpt"/>
</dbReference>
<dbReference type="PANTHER" id="PTHR24238">
    <property type="entry name" value="G-PROTEIN COUPLED RECEPTOR"/>
    <property type="match status" value="1"/>
</dbReference>
<dbReference type="PANTHER" id="PTHR24238:SF57">
    <property type="entry name" value="G-PROTEIN COUPLED RECEPTOR 83"/>
    <property type="match status" value="1"/>
</dbReference>
<dbReference type="Pfam" id="PF00001">
    <property type="entry name" value="7tm_1"/>
    <property type="match status" value="1"/>
</dbReference>
<dbReference type="PRINTS" id="PR00237">
    <property type="entry name" value="GPCRRHODOPSN"/>
</dbReference>
<dbReference type="PRINTS" id="PR01012">
    <property type="entry name" value="NRPEPTIDEYR"/>
</dbReference>
<dbReference type="SMART" id="SM01381">
    <property type="entry name" value="7TM_GPCR_Srsx"/>
    <property type="match status" value="1"/>
</dbReference>
<dbReference type="SUPFAM" id="SSF81321">
    <property type="entry name" value="Family A G protein-coupled receptor-like"/>
    <property type="match status" value="1"/>
</dbReference>
<dbReference type="PROSITE" id="PS00237">
    <property type="entry name" value="G_PROTEIN_RECEP_F1_1"/>
    <property type="match status" value="1"/>
</dbReference>
<dbReference type="PROSITE" id="PS50262">
    <property type="entry name" value="G_PROTEIN_RECEP_F1_2"/>
    <property type="match status" value="1"/>
</dbReference>
<reference key="1">
    <citation type="submission" date="1999-09" db="EMBL/GenBank/DDBJ databases">
        <authorList>
            <person name="Perret J."/>
            <person name="Simons M."/>
            <person name="De Moerlooze L."/>
            <person name="Parmentier M."/>
        </authorList>
    </citation>
    <scope>NUCLEOTIDE SEQUENCE [MRNA]</scope>
    <source>
        <tissue>Thyroid</tissue>
    </source>
</reference>
<organism>
    <name type="scientific">Canis lupus familiaris</name>
    <name type="common">Dog</name>
    <name type="synonym">Canis familiaris</name>
    <dbReference type="NCBI Taxonomy" id="9615"/>
    <lineage>
        <taxon>Eukaryota</taxon>
        <taxon>Metazoa</taxon>
        <taxon>Chordata</taxon>
        <taxon>Craniata</taxon>
        <taxon>Vertebrata</taxon>
        <taxon>Euteleostomi</taxon>
        <taxon>Mammalia</taxon>
        <taxon>Eutheria</taxon>
        <taxon>Laurasiatheria</taxon>
        <taxon>Carnivora</taxon>
        <taxon>Caniformia</taxon>
        <taxon>Canidae</taxon>
        <taxon>Canis</taxon>
    </lineage>
</organism>
<evidence type="ECO:0000250" key="1">
    <source>
        <dbReference type="UniProtKB" id="P30731"/>
    </source>
</evidence>
<evidence type="ECO:0000250" key="2">
    <source>
        <dbReference type="UniProtKB" id="Q8VHD7"/>
    </source>
</evidence>
<evidence type="ECO:0000255" key="3"/>
<evidence type="ECO:0000255" key="4">
    <source>
        <dbReference type="PROSITE-ProRule" id="PRU00521"/>
    </source>
</evidence>
<name>GPR83_CANLF</name>
<comment type="function">
    <text evidence="1">G-protein coupled receptor for PEN, a neuropeptide produced from the precursor protein, proSAAS (encoded by PCSK1N). Acts through a G(i)- and G(q)-alpha-alpha-mediated pathway in response to PEN. Plays a role in food intake and body weight regulation. May contribute to the regulation of anxiety-related behaviors.</text>
</comment>
<comment type="subcellular location">
    <subcellularLocation>
        <location evidence="1">Cell membrane</location>
        <topology evidence="3">Multi-pass membrane protein</topology>
    </subcellularLocation>
    <text evidence="1">Colocalizes with GPR171 in the paraventricular nucleus. Colocalizes with the ghrelin receptor GHSR1A in the hypothalamus.</text>
</comment>
<comment type="miscellaneous">
    <text evidence="1 2">NPY has been reported to be a ligand for GPR83 (By similarity). However, a more recent study found that radiolabeled PEN binding to GPR83 is not affected by NPY concentrations below 1 mM, only very high, non-physiological concentrations causes a partial, displacement of PEN binding (By similarity).</text>
</comment>
<comment type="similarity">
    <text evidence="4">Belongs to the G-protein coupled receptor 1 family.</text>
</comment>
<protein>
    <recommendedName>
        <fullName>G-protein coupled receptor 83</fullName>
    </recommendedName>
    <alternativeName>
        <fullName>Glucocorticoid-induced receptor</fullName>
    </alternativeName>
</protein>
<proteinExistence type="evidence at transcript level"/>
<sequence length="422" mass="48043">MGRRGALLCLLPLLRAAERPEGRADEPGLEAALAGPNASHFFWSNYSFSDWQNFVGRRRYGAESQNPTVKALLVVAYSFIIVFSLFGNVLVCHVIFKNQRMRSATSLFIVNLAVADILITLLNTPFTLVRFVNSTWVFGKGMCHVSRFAQYCSLHVSALTLTAIAVDRHQVIMHPLKPRISITKGVIYITVIWTMATFFSLPHAICQKLFTFKYSEDIVRSLCLPDFPEPADLFWKYLDLATFILLYILPLLIISVAYARVAKKLWLCNTIGDVTTEQYLALRRKKKKTIKMLMLVVVLFALCWFPLNCYVLLLSSKVIHTNNALYFAFHWFAMSSTCYNPFIYCWLNENFRIELKALLSMCQRLPKPQEERPPSPVPSFRVAWTEKSNGRRVPPANNLLLSSHLHSGKTDLSSVEPIVAMS</sequence>
<feature type="signal peptide" evidence="3">
    <location>
        <begin position="1"/>
        <end position="16"/>
    </location>
</feature>
<feature type="chain" id="PRO_0000012802" description="G-protein coupled receptor 83">
    <location>
        <begin position="17"/>
        <end position="422"/>
    </location>
</feature>
<feature type="topological domain" description="Extracellular" evidence="3">
    <location>
        <begin position="17"/>
        <end position="70"/>
    </location>
</feature>
<feature type="transmembrane region" description="Helical; Name=1" evidence="3">
    <location>
        <begin position="71"/>
        <end position="91"/>
    </location>
</feature>
<feature type="topological domain" description="Cytoplasmic" evidence="3">
    <location>
        <begin position="92"/>
        <end position="106"/>
    </location>
</feature>
<feature type="transmembrane region" description="Helical; Name=2" evidence="3">
    <location>
        <begin position="107"/>
        <end position="128"/>
    </location>
</feature>
<feature type="topological domain" description="Extracellular" evidence="3">
    <location>
        <begin position="129"/>
        <end position="144"/>
    </location>
</feature>
<feature type="transmembrane region" description="Helical; Name=3" evidence="3">
    <location>
        <begin position="145"/>
        <end position="166"/>
    </location>
</feature>
<feature type="topological domain" description="Cytoplasmic" evidence="3">
    <location>
        <begin position="167"/>
        <end position="185"/>
    </location>
</feature>
<feature type="transmembrane region" description="Helical; Name=4" evidence="3">
    <location>
        <begin position="186"/>
        <end position="207"/>
    </location>
</feature>
<feature type="topological domain" description="Extracellular" evidence="3">
    <location>
        <begin position="208"/>
        <end position="237"/>
    </location>
</feature>
<feature type="transmembrane region" description="Helical; Name=5" evidence="3">
    <location>
        <begin position="238"/>
        <end position="259"/>
    </location>
</feature>
<feature type="topological domain" description="Cytoplasmic" evidence="3">
    <location>
        <begin position="260"/>
        <end position="292"/>
    </location>
</feature>
<feature type="transmembrane region" description="Helical; Name=6" evidence="3">
    <location>
        <begin position="293"/>
        <end position="314"/>
    </location>
</feature>
<feature type="topological domain" description="Extracellular" evidence="3">
    <location>
        <begin position="315"/>
        <end position="326"/>
    </location>
</feature>
<feature type="transmembrane region" description="Helical; Name=7" evidence="3">
    <location>
        <begin position="327"/>
        <end position="347"/>
    </location>
</feature>
<feature type="topological domain" description="Cytoplasmic" evidence="3">
    <location>
        <begin position="348"/>
        <end position="422"/>
    </location>
</feature>
<feature type="glycosylation site" description="N-linked (GlcNAc...) asparagine" evidence="3">
    <location>
        <position position="37"/>
    </location>
</feature>
<feature type="glycosylation site" description="N-linked (GlcNAc...) asparagine" evidence="3">
    <location>
        <position position="45"/>
    </location>
</feature>
<feature type="glycosylation site" description="N-linked (GlcNAc...) asparagine" evidence="3">
    <location>
        <position position="133"/>
    </location>
</feature>